<dbReference type="EMBL" id="JZLG01000000">
    <property type="status" value="NOT_ANNOTATED_CDS"/>
    <property type="molecule type" value="Genomic_DNA"/>
</dbReference>
<dbReference type="SMR" id="P0DPG1"/>
<dbReference type="STRING" id="9531.ENSCATP00000033794"/>
<dbReference type="Ensembl" id="ENSCATT00000058066.1">
    <property type="protein sequence ID" value="ENSCATP00000033792.1"/>
    <property type="gene ID" value="ENSCATG00000039865.1"/>
</dbReference>
<dbReference type="GeneID" id="105595126"/>
<dbReference type="KEGG" id="caty:105595126"/>
<dbReference type="CTD" id="341"/>
<dbReference type="GeneTree" id="ENSGT00390000011584"/>
<dbReference type="OMA" id="GTSTRNW"/>
<dbReference type="OrthoDB" id="14429at314294"/>
<dbReference type="Proteomes" id="UP000233060">
    <property type="component" value="Unassembled WGS sequence"/>
</dbReference>
<dbReference type="Bgee" id="ENSCATG00000039865">
    <property type="expression patterns" value="Expressed in liver and 12 other cell types or tissues"/>
</dbReference>
<dbReference type="GO" id="GO:0034364">
    <property type="term" value="C:high-density lipoprotein particle"/>
    <property type="evidence" value="ECO:0007669"/>
    <property type="project" value="TreeGrafter"/>
</dbReference>
<dbReference type="GO" id="GO:0034361">
    <property type="term" value="C:very-low-density lipoprotein particle"/>
    <property type="evidence" value="ECO:0007669"/>
    <property type="project" value="TreeGrafter"/>
</dbReference>
<dbReference type="GO" id="GO:0005504">
    <property type="term" value="F:fatty acid binding"/>
    <property type="evidence" value="ECO:0007669"/>
    <property type="project" value="TreeGrafter"/>
</dbReference>
<dbReference type="GO" id="GO:0004859">
    <property type="term" value="F:phospholipase inhibitor activity"/>
    <property type="evidence" value="ECO:0007669"/>
    <property type="project" value="TreeGrafter"/>
</dbReference>
<dbReference type="GO" id="GO:0006869">
    <property type="term" value="P:lipid transport"/>
    <property type="evidence" value="ECO:0007669"/>
    <property type="project" value="UniProtKB-KW"/>
</dbReference>
<dbReference type="GO" id="GO:0042157">
    <property type="term" value="P:lipoprotein metabolic process"/>
    <property type="evidence" value="ECO:0007669"/>
    <property type="project" value="InterPro"/>
</dbReference>
<dbReference type="GO" id="GO:0032375">
    <property type="term" value="P:negative regulation of cholesterol transport"/>
    <property type="evidence" value="ECO:0007669"/>
    <property type="project" value="TreeGrafter"/>
</dbReference>
<dbReference type="GO" id="GO:0050995">
    <property type="term" value="P:negative regulation of lipid catabolic process"/>
    <property type="evidence" value="ECO:0007669"/>
    <property type="project" value="TreeGrafter"/>
</dbReference>
<dbReference type="GO" id="GO:0010916">
    <property type="term" value="P:negative regulation of very-low-density lipoprotein particle clearance"/>
    <property type="evidence" value="ECO:0007669"/>
    <property type="project" value="TreeGrafter"/>
</dbReference>
<dbReference type="GO" id="GO:0006641">
    <property type="term" value="P:triglyceride metabolic process"/>
    <property type="evidence" value="ECO:0007669"/>
    <property type="project" value="TreeGrafter"/>
</dbReference>
<dbReference type="GO" id="GO:0034447">
    <property type="term" value="P:very-low-density lipoprotein particle clearance"/>
    <property type="evidence" value="ECO:0007669"/>
    <property type="project" value="TreeGrafter"/>
</dbReference>
<dbReference type="Gene3D" id="4.10.260.30">
    <property type="entry name" value="Apolipoprotein C-I"/>
    <property type="match status" value="1"/>
</dbReference>
<dbReference type="InterPro" id="IPR043081">
    <property type="entry name" value="ApoC-1_sf"/>
</dbReference>
<dbReference type="InterPro" id="IPR006781">
    <property type="entry name" value="ApoC-I"/>
</dbReference>
<dbReference type="PANTHER" id="PTHR16565">
    <property type="entry name" value="APOLIPOPROTEIN C-I"/>
    <property type="match status" value="1"/>
</dbReference>
<dbReference type="PANTHER" id="PTHR16565:SF2">
    <property type="entry name" value="APOLIPOPROTEIN C-I"/>
    <property type="match status" value="1"/>
</dbReference>
<dbReference type="Pfam" id="PF04691">
    <property type="entry name" value="ApoC-I"/>
    <property type="match status" value="1"/>
</dbReference>
<organism>
    <name type="scientific">Cercocebus atys</name>
    <name type="common">Sooty mangabey</name>
    <name type="synonym">Cercocebus torquatus atys</name>
    <dbReference type="NCBI Taxonomy" id="9531"/>
    <lineage>
        <taxon>Eukaryota</taxon>
        <taxon>Metazoa</taxon>
        <taxon>Chordata</taxon>
        <taxon>Craniata</taxon>
        <taxon>Vertebrata</taxon>
        <taxon>Euteleostomi</taxon>
        <taxon>Mammalia</taxon>
        <taxon>Eutheria</taxon>
        <taxon>Euarchontoglires</taxon>
        <taxon>Primates</taxon>
        <taxon>Haplorrhini</taxon>
        <taxon>Catarrhini</taxon>
        <taxon>Cercopithecidae</taxon>
        <taxon>Cercopithecinae</taxon>
        <taxon>Cercocebus</taxon>
    </lineage>
</organism>
<feature type="signal peptide" evidence="5">
    <location>
        <begin position="1"/>
        <end position="26"/>
    </location>
</feature>
<feature type="chain" id="PRO_0000444098" description="Apolipoprotein C-I, basic form">
    <location>
        <begin position="27"/>
        <end position="83"/>
    </location>
</feature>
<feature type="chain" id="PRO_0000444099" description="Cholesteryl ester transfer inhibitor protein" evidence="3">
    <location>
        <begin position="27"/>
        <end position="64"/>
    </location>
</feature>
<feature type="chain" id="PRO_0000444100" description="Truncated apolipoprotein C-I, basic form" evidence="4">
    <location>
        <begin position="29"/>
        <end position="83"/>
    </location>
</feature>
<sequence length="83" mass="9390">MRLFLSLPVLVVVLSMVLEGPAPAQGAPDVSSALDKLKEFGNTLEDKAWEVINRIKQSEFPAKTRDWFSETFRKVKEKLKINS</sequence>
<gene>
    <name type="primary">APOC1B</name>
</gene>
<proteinExistence type="inferred from homology"/>
<accession>P0DPG1</accession>
<protein>
    <recommendedName>
        <fullName>Apolipoprotein C-I, basic form</fullName>
        <shortName>Apo-CIB</shortName>
        <shortName>ApoC-IB</shortName>
    </recommendedName>
    <alternativeName>
        <fullName>Apolipoprotein C1B</fullName>
    </alternativeName>
    <component>
        <recommendedName>
            <fullName>Cholesteryl ester transfer inhibitor protein</fullName>
            <shortName>CETIP</shortName>
        </recommendedName>
    </component>
    <component>
        <recommendedName>
            <fullName>Truncated apolipoprotein C-I, basic form</fullName>
            <shortName>Apo-CIB'</shortName>
            <shortName>ApoC-IB'</shortName>
        </recommendedName>
    </component>
</protein>
<name>APO1B_CERAT</name>
<evidence type="ECO:0000250" key="1">
    <source>
        <dbReference type="UniProtKB" id="P02654"/>
    </source>
</evidence>
<evidence type="ECO:0000250" key="2">
    <source>
        <dbReference type="UniProtKB" id="P33047"/>
    </source>
</evidence>
<evidence type="ECO:0000250" key="3">
    <source>
        <dbReference type="UniProtKB" id="P34929"/>
    </source>
</evidence>
<evidence type="ECO:0000250" key="4">
    <source>
        <dbReference type="UniProtKB" id="P86336"/>
    </source>
</evidence>
<evidence type="ECO:0000255" key="5"/>
<evidence type="ECO:0000303" key="6">
    <source>
    </source>
</evidence>
<evidence type="ECO:0000305" key="7"/>
<reference key="1">
    <citation type="submission" date="2015-03" db="EMBL/GenBank/DDBJ databases">
        <title>Sooty reference genome and diversity panel.</title>
        <authorList>
            <person name="Liu Y."/>
            <person name="Hughes D.S."/>
            <person name="Murali S."/>
            <person name="Raveendran M."/>
            <person name="Korchina V."/>
            <person name="Wang M."/>
            <person name="Jhangiani S."/>
            <person name="Bandaranaike D."/>
            <person name="Bellair M."/>
            <person name="Blankenburg K."/>
            <person name="Chao H."/>
            <person name="Dahdouli M."/>
            <person name="Dinh H."/>
            <person name="Doddapaneni H."/>
            <person name="English A."/>
            <person name="Firestine M."/>
            <person name="Gross S."/>
            <person name="Hernandez B."/>
            <person name="Javaid M."/>
            <person name="Jayaseelan J."/>
            <person name="Jones J."/>
            <person name="Joshi V."/>
            <person name="Khan Z."/>
            <person name="Kovar C."/>
            <person name="Lee S."/>
            <person name="Newsham I."/>
            <person name="Nguyen L."/>
            <person name="Okwuonu G."/>
            <person name="Ongeri F."/>
            <person name="Osuji N."/>
            <person name="Pu L.-L."/>
            <person name="Puazo M."/>
            <person name="Qu C."/>
            <person name="Quiroz J."/>
            <person name="Raj R."/>
            <person name="Reid J.G."/>
            <person name="Santibanez J."/>
            <person name="Scheel M."/>
            <person name="Sexton D."/>
            <person name="Shah N."/>
            <person name="Skinner E."/>
            <person name="Vee V."/>
            <person name="Wu Y."/>
            <person name="Han Y."/>
            <person name="Muzny D.M."/>
            <person name="Richards S."/>
            <person name="Worley K.C."/>
            <person name="Rogers J."/>
            <person name="Gibbs R.A."/>
        </authorList>
    </citation>
    <scope>NUCLEOTIDE SEQUENCE [LARGE SCALE GENOMIC DNA]</scope>
</reference>
<reference key="2">
    <citation type="journal article" date="2013" name="Front. Biol.">
        <title>Proteogenomic Review of the Changes in Primate apoC-I during Evolution.</title>
        <authorList>
            <person name="Puppione D."/>
            <person name="Whitelegge J.P."/>
        </authorList>
    </citation>
    <scope>REVIEW</scope>
</reference>
<reference key="3">
    <citation type="journal article" date="2014" name="Comp. Biochem. Physiol.">
        <title>Higher primates, but not New World monkeys, have a duplicate set of enhancers flanking their apoC-I genes.</title>
        <authorList>
            <person name="Puppione D.L."/>
        </authorList>
    </citation>
    <scope>GENE DUPLICATION</scope>
</reference>
<reference key="4">
    <citation type="unpublished observations" date="2018-03">
        <authorList>
            <person name="Puppione D.L."/>
        </authorList>
    </citation>
    <scope>IDENTIFICATION</scope>
</reference>
<comment type="function">
    <text evidence="1 2">Inhibitor of lipoprotein binding to the low density lipoprotein (LDL) receptor, LDL receptor-related protein, and very low density lipoprotein (VLDL) receptor. Associates with high density lipoproteins (HDL) and the triacylglycerol-rich lipoproteins in the plasma and makes up about 10% of the protein of the VLDL and 2% of that of HDL. Appears to interfere directly with fatty acid uptake and is also the major plasma inhibitor of cholesteryl ester transfer protein (CETP). Binds free fatty acids and reduces their intracellular esterification. Modulates the interaction of APOE with beta-migrating VLDL and inhibits binding of beta-VLDL to the LDL receptor-related protein.</text>
</comment>
<comment type="subcellular location">
    <subcellularLocation>
        <location evidence="1">Secreted</location>
    </subcellularLocation>
</comment>
<comment type="miscellaneous">
    <text evidence="6">Apolipoprotein C-I is present in acidic (APOC1A) and basic (APOC1B) forms in P.paniscus, P.abelii and P.troglodytes and perhaps also in baboons and macaques. The two genes for ApoC-I arose through a duplication process that occurred after the divergence of New World monkeys from the human lineage. In human, the acidic form has become a pseudogene sometime between the divergence of bonobos and chimpanzees from the human lineage and the appearance of the Denisovans. Pseudogenization resulted when the codon for the penultimate amino acid in the signal sequence was changed to a stop codon.</text>
</comment>
<comment type="similarity">
    <text evidence="7">Belongs to the apolipoprotein C1 family.</text>
</comment>
<keyword id="KW-0445">Lipid transport</keyword>
<keyword id="KW-1185">Reference proteome</keyword>
<keyword id="KW-0964">Secreted</keyword>
<keyword id="KW-0732">Signal</keyword>
<keyword id="KW-0813">Transport</keyword>